<evidence type="ECO:0000269" key="1">
    <source>
    </source>
</evidence>
<evidence type="ECO:0000269" key="2">
    <source>
    </source>
</evidence>
<evidence type="ECO:0000269" key="3">
    <source>
    </source>
</evidence>
<evidence type="ECO:0000269" key="4">
    <source>
    </source>
</evidence>
<evidence type="ECO:0000305" key="5"/>
<evidence type="ECO:0007829" key="6">
    <source>
        <dbReference type="PDB" id="1NEK"/>
    </source>
</evidence>
<evidence type="ECO:0007829" key="7">
    <source>
        <dbReference type="PDB" id="2WDQ"/>
    </source>
</evidence>
<name>DHSD_ECOLI</name>
<feature type="chain" id="PRO_0000158672" description="Succinate dehydrogenase hydrophobic membrane anchor subunit">
    <location>
        <begin position="1"/>
        <end position="115"/>
    </location>
</feature>
<feature type="topological domain" description="Cytoplasmic" evidence="5">
    <location>
        <begin position="1"/>
        <end position="15"/>
    </location>
</feature>
<feature type="transmembrane region" description="Helical">
    <location>
        <begin position="16"/>
        <end position="36"/>
    </location>
</feature>
<feature type="topological domain" description="Periplasmic" evidence="5">
    <location>
        <begin position="37"/>
        <end position="58"/>
    </location>
</feature>
<feature type="transmembrane region" description="Helical">
    <location>
        <begin position="59"/>
        <end position="80"/>
    </location>
</feature>
<feature type="topological domain" description="Cytoplasmic" evidence="5">
    <location>
        <begin position="81"/>
        <end position="90"/>
    </location>
</feature>
<feature type="transmembrane region" description="Helical">
    <location>
        <begin position="91"/>
        <end position="115"/>
    </location>
</feature>
<feature type="binding site" description="axial binding residue">
    <location>
        <position position="71"/>
    </location>
    <ligand>
        <name>heme</name>
        <dbReference type="ChEBI" id="CHEBI:30413"/>
        <note>ligand shared with second transmembrane subunit</note>
    </ligand>
    <ligandPart>
        <name>Fe</name>
        <dbReference type="ChEBI" id="CHEBI:18248"/>
    </ligandPart>
</feature>
<feature type="binding site" evidence="1">
    <location>
        <position position="83"/>
    </location>
    <ligand>
        <name>a ubiquinone</name>
        <dbReference type="ChEBI" id="CHEBI:16389"/>
    </ligand>
</feature>
<feature type="strand" evidence="6">
    <location>
        <begin position="5"/>
        <end position="11"/>
    </location>
</feature>
<feature type="helix" evidence="7">
    <location>
        <begin position="12"/>
        <end position="37"/>
    </location>
</feature>
<feature type="turn" evidence="6">
    <location>
        <begin position="38"/>
        <end position="40"/>
    </location>
</feature>
<feature type="helix" evidence="7">
    <location>
        <begin position="45"/>
        <end position="53"/>
    </location>
</feature>
<feature type="helix" evidence="7">
    <location>
        <begin position="55"/>
        <end position="83"/>
    </location>
</feature>
<feature type="helix" evidence="7">
    <location>
        <begin position="87"/>
        <end position="112"/>
    </location>
</feature>
<protein>
    <recommendedName>
        <fullName>Succinate dehydrogenase hydrophobic membrane anchor subunit</fullName>
    </recommendedName>
</protein>
<sequence length="115" mass="12868">MVSNASALGRNGVHDFILVRATAIVLTLYIIYMVGFFATSGELTYEVWIGFFASAFTKVFTLLALFSILIHAWIGMWQVLTDYVKPLALRLMLQLVIVVALVVYVIYGFVVVWGV</sequence>
<keyword id="KW-0002">3D-structure</keyword>
<keyword id="KW-0997">Cell inner membrane</keyword>
<keyword id="KW-1003">Cell membrane</keyword>
<keyword id="KW-0249">Electron transport</keyword>
<keyword id="KW-0349">Heme</keyword>
<keyword id="KW-0408">Iron</keyword>
<keyword id="KW-0472">Membrane</keyword>
<keyword id="KW-0479">Metal-binding</keyword>
<keyword id="KW-1185">Reference proteome</keyword>
<keyword id="KW-0812">Transmembrane</keyword>
<keyword id="KW-1133">Transmembrane helix</keyword>
<keyword id="KW-0813">Transport</keyword>
<keyword id="KW-0816">Tricarboxylic acid cycle</keyword>
<proteinExistence type="evidence at protein level"/>
<gene>
    <name type="primary">sdhD</name>
    <name type="ordered locus">b0722</name>
    <name type="ordered locus">JW0712</name>
</gene>
<dbReference type="EMBL" id="J01619">
    <property type="protein sequence ID" value="AAA23894.1"/>
    <property type="molecule type" value="Genomic_DNA"/>
</dbReference>
<dbReference type="EMBL" id="X00980">
    <property type="protein sequence ID" value="CAA25486.1"/>
    <property type="molecule type" value="Genomic_DNA"/>
</dbReference>
<dbReference type="EMBL" id="U00096">
    <property type="protein sequence ID" value="AAC73816.1"/>
    <property type="molecule type" value="Genomic_DNA"/>
</dbReference>
<dbReference type="EMBL" id="AP009048">
    <property type="protein sequence ID" value="BAA35389.1"/>
    <property type="molecule type" value="Genomic_DNA"/>
</dbReference>
<dbReference type="PIR" id="B28836">
    <property type="entry name" value="DEECS2"/>
</dbReference>
<dbReference type="RefSeq" id="NP_415250.1">
    <property type="nucleotide sequence ID" value="NC_000913.3"/>
</dbReference>
<dbReference type="RefSeq" id="WP_000254365.1">
    <property type="nucleotide sequence ID" value="NZ_STEB01000035.1"/>
</dbReference>
<dbReference type="PDB" id="1NEK">
    <property type="method" value="X-ray"/>
    <property type="resolution" value="2.60 A"/>
    <property type="chains" value="D=1-115"/>
</dbReference>
<dbReference type="PDB" id="1NEN">
    <property type="method" value="X-ray"/>
    <property type="resolution" value="2.90 A"/>
    <property type="chains" value="D=1-115"/>
</dbReference>
<dbReference type="PDB" id="2ACZ">
    <property type="method" value="X-ray"/>
    <property type="resolution" value="3.10 A"/>
    <property type="chains" value="D=1-115"/>
</dbReference>
<dbReference type="PDB" id="2WDQ">
    <property type="method" value="X-ray"/>
    <property type="resolution" value="2.40 A"/>
    <property type="chains" value="D/H/L=1-115"/>
</dbReference>
<dbReference type="PDB" id="2WDR">
    <property type="method" value="X-ray"/>
    <property type="resolution" value="3.20 A"/>
    <property type="chains" value="D/H/L=1-115"/>
</dbReference>
<dbReference type="PDB" id="2WDV">
    <property type="method" value="X-ray"/>
    <property type="resolution" value="3.20 A"/>
    <property type="chains" value="D/H/L=1-115"/>
</dbReference>
<dbReference type="PDB" id="2WP9">
    <property type="method" value="X-ray"/>
    <property type="resolution" value="2.70 A"/>
    <property type="chains" value="D/H/L=1-115"/>
</dbReference>
<dbReference type="PDB" id="2WS3">
    <property type="method" value="X-ray"/>
    <property type="resolution" value="3.20 A"/>
    <property type="chains" value="D/H/L=1-115"/>
</dbReference>
<dbReference type="PDB" id="2WU2">
    <property type="method" value="X-ray"/>
    <property type="resolution" value="2.50 A"/>
    <property type="chains" value="D/H/L=1-115"/>
</dbReference>
<dbReference type="PDB" id="2WU5">
    <property type="method" value="X-ray"/>
    <property type="resolution" value="2.80 A"/>
    <property type="chains" value="D/H/L=1-115"/>
</dbReference>
<dbReference type="PDBsum" id="1NEK"/>
<dbReference type="PDBsum" id="1NEN"/>
<dbReference type="PDBsum" id="2ACZ"/>
<dbReference type="PDBsum" id="2WDQ"/>
<dbReference type="PDBsum" id="2WDR"/>
<dbReference type="PDBsum" id="2WDV"/>
<dbReference type="PDBsum" id="2WP9"/>
<dbReference type="PDBsum" id="2WS3"/>
<dbReference type="PDBsum" id="2WU2"/>
<dbReference type="PDBsum" id="2WU5"/>
<dbReference type="SMR" id="P0AC44"/>
<dbReference type="BioGRID" id="4259943">
    <property type="interactions" value="25"/>
</dbReference>
<dbReference type="ComplexPortal" id="CPX-1931">
    <property type="entry name" value="Respiratory chain complex II"/>
</dbReference>
<dbReference type="DIP" id="DIP-10838N"/>
<dbReference type="FunCoup" id="P0AC44">
    <property type="interactions" value="204"/>
</dbReference>
<dbReference type="IntAct" id="P0AC44">
    <property type="interactions" value="1"/>
</dbReference>
<dbReference type="STRING" id="511145.b0722"/>
<dbReference type="DrugBank" id="DB07671">
    <property type="generic name" value="2-[1-METHYLHEXYL]-4,6-DINITROPHENOL"/>
</dbReference>
<dbReference type="DrugBank" id="DB04631">
    <property type="generic name" value="Atpenin A5"/>
</dbReference>
<dbReference type="DrugBank" id="DB08690">
    <property type="generic name" value="Ubiquinone Q2"/>
</dbReference>
<dbReference type="jPOST" id="P0AC44"/>
<dbReference type="PaxDb" id="511145-b0722"/>
<dbReference type="EnsemblBacteria" id="AAC73816">
    <property type="protein sequence ID" value="AAC73816"/>
    <property type="gene ID" value="b0722"/>
</dbReference>
<dbReference type="GeneID" id="93776762"/>
<dbReference type="GeneID" id="945322"/>
<dbReference type="KEGG" id="ecj:JW0712"/>
<dbReference type="KEGG" id="eco:b0722"/>
<dbReference type="KEGG" id="ecoc:C3026_03615"/>
<dbReference type="PATRIC" id="fig|1411691.4.peg.1550"/>
<dbReference type="EchoBASE" id="EB0927"/>
<dbReference type="eggNOG" id="COG2142">
    <property type="taxonomic scope" value="Bacteria"/>
</dbReference>
<dbReference type="HOGENOM" id="CLU_151315_2_0_6"/>
<dbReference type="InParanoid" id="P0AC44"/>
<dbReference type="OMA" id="QWMKVLT"/>
<dbReference type="OrthoDB" id="5612767at2"/>
<dbReference type="PhylomeDB" id="P0AC44"/>
<dbReference type="BioCyc" id="EcoCyc:SDH-MEMB2"/>
<dbReference type="BioCyc" id="MetaCyc:SDH-MEMB2"/>
<dbReference type="UniPathway" id="UPA00223"/>
<dbReference type="EvolutionaryTrace" id="P0AC44"/>
<dbReference type="PHI-base" id="PHI:7963"/>
<dbReference type="PRO" id="PR:P0AC44"/>
<dbReference type="Proteomes" id="UP000000625">
    <property type="component" value="Chromosome"/>
</dbReference>
<dbReference type="GO" id="GO:0016020">
    <property type="term" value="C:membrane"/>
    <property type="evidence" value="ECO:0000303"/>
    <property type="project" value="ComplexPortal"/>
</dbReference>
<dbReference type="GO" id="GO:0005886">
    <property type="term" value="C:plasma membrane"/>
    <property type="evidence" value="ECO:0000314"/>
    <property type="project" value="EcoCyc"/>
</dbReference>
<dbReference type="GO" id="GO:0009055">
    <property type="term" value="F:electron transfer activity"/>
    <property type="evidence" value="ECO:0000314"/>
    <property type="project" value="EcoCyc"/>
</dbReference>
<dbReference type="GO" id="GO:0020037">
    <property type="term" value="F:heme binding"/>
    <property type="evidence" value="ECO:0000315"/>
    <property type="project" value="EcoCyc"/>
</dbReference>
<dbReference type="GO" id="GO:0046872">
    <property type="term" value="F:metal ion binding"/>
    <property type="evidence" value="ECO:0007669"/>
    <property type="project" value="UniProtKB-KW"/>
</dbReference>
<dbReference type="GO" id="GO:0019646">
    <property type="term" value="P:aerobic electron transport chain"/>
    <property type="evidence" value="ECO:0000303"/>
    <property type="project" value="ComplexPortal"/>
</dbReference>
<dbReference type="GO" id="GO:0009060">
    <property type="term" value="P:aerobic respiration"/>
    <property type="evidence" value="ECO:0000270"/>
    <property type="project" value="EcoCyc"/>
</dbReference>
<dbReference type="GO" id="GO:0017004">
    <property type="term" value="P:cytochrome complex assembly"/>
    <property type="evidence" value="ECO:0000315"/>
    <property type="project" value="EcoCyc"/>
</dbReference>
<dbReference type="GO" id="GO:0006099">
    <property type="term" value="P:tricarboxylic acid cycle"/>
    <property type="evidence" value="ECO:0007669"/>
    <property type="project" value="UniProtKB-UniPathway"/>
</dbReference>
<dbReference type="CDD" id="cd03494">
    <property type="entry name" value="SQR_TypeC_SdhD"/>
    <property type="match status" value="1"/>
</dbReference>
<dbReference type="FunFam" id="1.20.1300.10:FF:000001">
    <property type="entry name" value="Succinate dehydrogenase hydrophobic membrane anchor subunit"/>
    <property type="match status" value="1"/>
</dbReference>
<dbReference type="Gene3D" id="1.20.1300.10">
    <property type="entry name" value="Fumarate reductase/succinate dehydrogenase, transmembrane subunit"/>
    <property type="match status" value="1"/>
</dbReference>
<dbReference type="InterPro" id="IPR034804">
    <property type="entry name" value="SQR/QFR_C/D"/>
</dbReference>
<dbReference type="InterPro" id="IPR014312">
    <property type="entry name" value="Succ_DH_anchor"/>
</dbReference>
<dbReference type="InterPro" id="IPR000701">
    <property type="entry name" value="SuccDH_FuR_B_TM-su"/>
</dbReference>
<dbReference type="NCBIfam" id="NF007022">
    <property type="entry name" value="PRK09488.1"/>
    <property type="match status" value="1"/>
</dbReference>
<dbReference type="NCBIfam" id="TIGR02968">
    <property type="entry name" value="succ_dehyd_anc"/>
    <property type="match status" value="1"/>
</dbReference>
<dbReference type="PANTHER" id="PTHR38689">
    <property type="entry name" value="SUCCINATE DEHYDROGENASE HYDROPHOBIC MEMBRANE ANCHOR SUBUNIT"/>
    <property type="match status" value="1"/>
</dbReference>
<dbReference type="PANTHER" id="PTHR38689:SF1">
    <property type="entry name" value="SUCCINATE DEHYDROGENASE HYDROPHOBIC MEMBRANE ANCHOR SUBUNIT"/>
    <property type="match status" value="1"/>
</dbReference>
<dbReference type="Pfam" id="PF01127">
    <property type="entry name" value="Sdh_cyt"/>
    <property type="match status" value="1"/>
</dbReference>
<dbReference type="PIRSF" id="PIRSF000169">
    <property type="entry name" value="SDH_D"/>
    <property type="match status" value="1"/>
</dbReference>
<dbReference type="SUPFAM" id="SSF81343">
    <property type="entry name" value="Fumarate reductase respiratory complex transmembrane subunits"/>
    <property type="match status" value="1"/>
</dbReference>
<accession>P0AC44</accession>
<accession>P10445</accession>
<reference key="1">
    <citation type="journal article" date="1984" name="Biochem. J.">
        <title>Nucleotide sequence encoding the flavoprotein and hydrophobic subunits of the succinate dehydrogenase of Escherichia coli.</title>
        <authorList>
            <person name="Wood D."/>
            <person name="Darlison M.G."/>
            <person name="Wilde R.J."/>
            <person name="Guest J.R."/>
        </authorList>
    </citation>
    <scope>NUCLEOTIDE SEQUENCE [GENOMIC DNA]</scope>
    <source>
        <strain>K12</strain>
    </source>
</reference>
<reference key="2">
    <citation type="journal article" date="1996" name="DNA Res.">
        <title>A 718-kb DNA sequence of the Escherichia coli K-12 genome corresponding to the 12.7-28.0 min region on the linkage map.</title>
        <authorList>
            <person name="Oshima T."/>
            <person name="Aiba H."/>
            <person name="Baba T."/>
            <person name="Fujita K."/>
            <person name="Hayashi K."/>
            <person name="Honjo A."/>
            <person name="Ikemoto K."/>
            <person name="Inada T."/>
            <person name="Itoh T."/>
            <person name="Kajihara M."/>
            <person name="Kanai K."/>
            <person name="Kashimoto K."/>
            <person name="Kimura S."/>
            <person name="Kitagawa M."/>
            <person name="Makino K."/>
            <person name="Masuda S."/>
            <person name="Miki T."/>
            <person name="Mizobuchi K."/>
            <person name="Mori H."/>
            <person name="Motomura K."/>
            <person name="Nakamura Y."/>
            <person name="Nashimoto H."/>
            <person name="Nishio Y."/>
            <person name="Saito N."/>
            <person name="Sampei G."/>
            <person name="Seki Y."/>
            <person name="Tagami H."/>
            <person name="Takemoto K."/>
            <person name="Wada C."/>
            <person name="Yamamoto Y."/>
            <person name="Yano M."/>
            <person name="Horiuchi T."/>
        </authorList>
    </citation>
    <scope>NUCLEOTIDE SEQUENCE [LARGE SCALE GENOMIC DNA]</scope>
    <source>
        <strain>K12 / W3110 / ATCC 27325 / DSM 5911</strain>
    </source>
</reference>
<reference key="3">
    <citation type="journal article" date="1997" name="Science">
        <title>The complete genome sequence of Escherichia coli K-12.</title>
        <authorList>
            <person name="Blattner F.R."/>
            <person name="Plunkett G. III"/>
            <person name="Bloch C.A."/>
            <person name="Perna N.T."/>
            <person name="Burland V."/>
            <person name="Riley M."/>
            <person name="Collado-Vides J."/>
            <person name="Glasner J.D."/>
            <person name="Rode C.K."/>
            <person name="Mayhew G.F."/>
            <person name="Gregor J."/>
            <person name="Davis N.W."/>
            <person name="Kirkpatrick H.A."/>
            <person name="Goeden M.A."/>
            <person name="Rose D.J."/>
            <person name="Mau B."/>
            <person name="Shao Y."/>
        </authorList>
    </citation>
    <scope>NUCLEOTIDE SEQUENCE [LARGE SCALE GENOMIC DNA]</scope>
    <source>
        <strain>K12 / MG1655 / ATCC 47076</strain>
    </source>
</reference>
<reference key="4">
    <citation type="journal article" date="2006" name="Mol. Syst. Biol.">
        <title>Highly accurate genome sequences of Escherichia coli K-12 strains MG1655 and W3110.</title>
        <authorList>
            <person name="Hayashi K."/>
            <person name="Morooka N."/>
            <person name="Yamamoto Y."/>
            <person name="Fujita K."/>
            <person name="Isono K."/>
            <person name="Choi S."/>
            <person name="Ohtsubo E."/>
            <person name="Baba T."/>
            <person name="Wanner B.L."/>
            <person name="Mori H."/>
            <person name="Horiuchi T."/>
        </authorList>
    </citation>
    <scope>NUCLEOTIDE SEQUENCE [LARGE SCALE GENOMIC DNA]</scope>
    <source>
        <strain>K12 / W3110 / ATCC 27325 / DSM 5911</strain>
    </source>
</reference>
<reference key="5">
    <citation type="journal article" date="1998" name="Biochemistry">
        <title>Localization of histidine residues responsible for heme axial ligation in cytochrome b556 of complex II (succinate:ubiquinone oxidoreductase) in Escherichia coli.</title>
        <authorList>
            <person name="Vibat C.R."/>
            <person name="Cecchini G."/>
            <person name="Nakamura K."/>
            <person name="Kita K."/>
            <person name="Gennis R.B."/>
        </authorList>
    </citation>
    <scope>MUTAGENESIS OF HISTIDINE RESIDUES</scope>
</reference>
<reference key="6">
    <citation type="journal article" date="2005" name="Science">
        <title>Global topology analysis of the Escherichia coli inner membrane proteome.</title>
        <authorList>
            <person name="Daley D.O."/>
            <person name="Rapp M."/>
            <person name="Granseth E."/>
            <person name="Melen K."/>
            <person name="Drew D."/>
            <person name="von Heijne G."/>
        </authorList>
    </citation>
    <scope>SUBCELLULAR LOCATION</scope>
    <source>
        <strain>K12 / MG1655 / ATCC 47076</strain>
    </source>
</reference>
<reference key="7">
    <citation type="journal article" date="2003" name="Science">
        <title>Architecture of succinate dehydrogenase and reactive oxygen species generation.</title>
        <authorList>
            <person name="Yankovskaya V."/>
            <person name="Horsefield R."/>
            <person name="Toernroth S."/>
            <person name="Luna-Chavez C."/>
            <person name="Miyoshi H."/>
            <person name="Leger C."/>
            <person name="Byrne B."/>
            <person name="Cecchini G."/>
            <person name="Iwata S."/>
        </authorList>
    </citation>
    <scope>X-RAY CRYSTALLOGRAPHY (2.6 ANGSTROMS) IN COMPLEX WITH HEME AND UBIQUINONE</scope>
    <scope>SUBUNIT</scope>
    <scope>TRANSMEMBRANE TOPOLOGY</scope>
</reference>
<reference key="8">
    <citation type="journal article" date="2006" name="J. Biol. Chem.">
        <title>Structural and computational analysis of the quinone-binding site of complex II (succinate-ubiquinone oxidoreductase): a mechanism of electron transfer and proton conduction during ubiquinone reduction.</title>
        <authorList>
            <person name="Horsefield R."/>
            <person name="Yankovskaya V."/>
            <person name="Sexton G."/>
            <person name="Whittingham W."/>
            <person name="Shiomi K."/>
            <person name="Omura S."/>
            <person name="Byrne B."/>
            <person name="Cecchini G."/>
            <person name="Iwata S."/>
        </authorList>
    </citation>
    <scope>X-RAY CRYSTALLOGRAPHY (3.1 ANGSTROMS) IN COMPLEX WITH HEME</scope>
    <scope>SUBUNIT</scope>
    <scope>TRANSMEMBRANE TOPOLOGY</scope>
</reference>
<reference key="9">
    <citation type="journal article" date="2009" name="J. Biol. Chem.">
        <title>Structure of Escherichia coli succinate:quinone oxidoreductase with an occupied and empty quinone-binding site.</title>
        <authorList>
            <person name="Ruprecht J."/>
            <person name="Yankovskaya V."/>
            <person name="Maklashina E."/>
            <person name="Iwata S."/>
            <person name="Cecchini G."/>
        </authorList>
    </citation>
    <scope>X-RAY CRYSTALLOGRAPHY (2.4 ANGSTROMS) IN COMPLEX WITH HEME</scope>
    <scope>SUBUNIT</scope>
    <scope>TRANSMEMBRANE TOPOLOGY</scope>
</reference>
<comment type="function">
    <text>Membrane-anchoring subunit of succinate dehydrogenase (SDH).</text>
</comment>
<comment type="cofactor">
    <cofactor>
        <name>heme</name>
        <dbReference type="ChEBI" id="CHEBI:30413"/>
    </cofactor>
    <text>The heme is bound between the two transmembrane subunits.</text>
</comment>
<comment type="pathway">
    <text>Carbohydrate metabolism; tricarboxylic acid cycle.</text>
</comment>
<comment type="subunit">
    <text evidence="1 3 4">Part of an enzyme complex containing four subunits: a flavoprotein, an iron-sulfur protein, plus two membrane-anchoring proteins, SdhC and SdhD. The complex can form homotrimers.</text>
</comment>
<comment type="subcellular location">
    <subcellularLocation>
        <location evidence="2">Cell inner membrane</location>
        <topology evidence="2">Multi-pass membrane protein</topology>
    </subcellularLocation>
</comment>
<organism>
    <name type="scientific">Escherichia coli (strain K12)</name>
    <dbReference type="NCBI Taxonomy" id="83333"/>
    <lineage>
        <taxon>Bacteria</taxon>
        <taxon>Pseudomonadati</taxon>
        <taxon>Pseudomonadota</taxon>
        <taxon>Gammaproteobacteria</taxon>
        <taxon>Enterobacterales</taxon>
        <taxon>Enterobacteriaceae</taxon>
        <taxon>Escherichia</taxon>
    </lineage>
</organism>